<name>NMO_STAAN</name>
<sequence length="355" mass="38634">MWNKNRLTQMLSIEYPIIQAGMAGSTTPKLVASVSNSGGLGTIGAGYFNTQQLEDEIDYVRQLTSNSFGVNVFVPSQQSYTSSQIENMNAWLKPYRRALHLEEPVVKIIEEQQFKCHIDTIIKKQVPVCCFTFGIPNESIIERLKEANIKLIGTATSVDEAIANEKAGMDAIVAQGSEAGGHRGSFLKPKNQLPMVGTISLVPQIVDVVSIPVIAAGGIMDGRGVLASIVLGAEGVQMGTAFLTSQDSNASELLRDAIINSKETDTVVTKAFSGKLARGINNRFIEEMSQYEGDIPDYPIQNELTSSIRKAAANIGDKELTHMWSGQSPRLATTHPANTIMSNIINQINQIMQYK</sequence>
<gene>
    <name type="ordered locus">SA0781</name>
</gene>
<evidence type="ECO:0000250" key="1">
    <source>
        <dbReference type="UniProtKB" id="D0V3Y4"/>
    </source>
</evidence>
<evidence type="ECO:0000250" key="2">
    <source>
        <dbReference type="UniProtKB" id="Q9HWH9"/>
    </source>
</evidence>
<evidence type="ECO:0000305" key="3"/>
<protein>
    <recommendedName>
        <fullName>Probable nitronate monooxygenase</fullName>
        <shortName>NMO</shortName>
        <ecNumber evidence="2">1.13.12.-</ecNumber>
    </recommendedName>
    <alternativeName>
        <fullName>Propionate 3-nitronate monooxygenase</fullName>
        <shortName>P3N monooxygenase</shortName>
    </alternativeName>
</protein>
<feature type="chain" id="PRO_0000360897" description="Probable nitronate monooxygenase">
    <location>
        <begin position="1"/>
        <end position="355"/>
    </location>
</feature>
<feature type="binding site" evidence="2">
    <location>
        <position position="71"/>
    </location>
    <ligand>
        <name>FMN</name>
        <dbReference type="ChEBI" id="CHEBI:58210"/>
    </ligand>
</feature>
<feature type="binding site" evidence="2">
    <location>
        <position position="175"/>
    </location>
    <ligand>
        <name>FMN</name>
        <dbReference type="ChEBI" id="CHEBI:58210"/>
    </ligand>
</feature>
<feature type="binding site" evidence="2">
    <location>
        <position position="180"/>
    </location>
    <ligand>
        <name>FMN</name>
        <dbReference type="ChEBI" id="CHEBI:58210"/>
    </ligand>
</feature>
<feature type="binding site" evidence="2">
    <location>
        <position position="218"/>
    </location>
    <ligand>
        <name>FMN</name>
        <dbReference type="ChEBI" id="CHEBI:58210"/>
    </ligand>
</feature>
<feature type="binding site" evidence="2">
    <location>
        <begin position="237"/>
        <end position="240"/>
    </location>
    <ligand>
        <name>FMN</name>
        <dbReference type="ChEBI" id="CHEBI:58210"/>
    </ligand>
</feature>
<dbReference type="EC" id="1.13.12.-" evidence="2"/>
<dbReference type="EMBL" id="BA000018">
    <property type="protein sequence ID" value="BAB42020.1"/>
    <property type="molecule type" value="Genomic_DNA"/>
</dbReference>
<dbReference type="PIR" id="A89858">
    <property type="entry name" value="A89858"/>
</dbReference>
<dbReference type="RefSeq" id="WP_000267236.1">
    <property type="nucleotide sequence ID" value="NC_002745.2"/>
</dbReference>
<dbReference type="SMR" id="Q99VF6"/>
<dbReference type="EnsemblBacteria" id="BAB42020">
    <property type="protein sequence ID" value="BAB42020"/>
    <property type="gene ID" value="BAB42020"/>
</dbReference>
<dbReference type="KEGG" id="sau:SA0781"/>
<dbReference type="HOGENOM" id="CLU_038732_5_1_9"/>
<dbReference type="GO" id="GO:0018580">
    <property type="term" value="F:nitronate monooxygenase activity"/>
    <property type="evidence" value="ECO:0007669"/>
    <property type="project" value="InterPro"/>
</dbReference>
<dbReference type="GO" id="GO:0000166">
    <property type="term" value="F:nucleotide binding"/>
    <property type="evidence" value="ECO:0007669"/>
    <property type="project" value="UniProtKB-KW"/>
</dbReference>
<dbReference type="GO" id="GO:0009636">
    <property type="term" value="P:response to toxic substance"/>
    <property type="evidence" value="ECO:0007669"/>
    <property type="project" value="UniProtKB-KW"/>
</dbReference>
<dbReference type="CDD" id="cd04730">
    <property type="entry name" value="NPD_like"/>
    <property type="match status" value="1"/>
</dbReference>
<dbReference type="FunFam" id="3.20.20.70:FF:000154">
    <property type="entry name" value="Probable nitronate monooxygenase"/>
    <property type="match status" value="1"/>
</dbReference>
<dbReference type="Gene3D" id="3.20.20.70">
    <property type="entry name" value="Aldolase class I"/>
    <property type="match status" value="1"/>
</dbReference>
<dbReference type="InterPro" id="IPR013785">
    <property type="entry name" value="Aldolase_TIM"/>
</dbReference>
<dbReference type="InterPro" id="IPR004136">
    <property type="entry name" value="NMO"/>
</dbReference>
<dbReference type="PANTHER" id="PTHR42747">
    <property type="entry name" value="NITRONATE MONOOXYGENASE-RELATED"/>
    <property type="match status" value="1"/>
</dbReference>
<dbReference type="PANTHER" id="PTHR42747:SF3">
    <property type="entry name" value="NITRONATE MONOOXYGENASE-RELATED"/>
    <property type="match status" value="1"/>
</dbReference>
<dbReference type="Pfam" id="PF03060">
    <property type="entry name" value="NMO"/>
    <property type="match status" value="1"/>
</dbReference>
<dbReference type="SUPFAM" id="SSF51412">
    <property type="entry name" value="Inosine monophosphate dehydrogenase (IMPDH)"/>
    <property type="match status" value="1"/>
</dbReference>
<keyword id="KW-0216">Detoxification</keyword>
<keyword id="KW-0285">Flavoprotein</keyword>
<keyword id="KW-0288">FMN</keyword>
<keyword id="KW-0503">Monooxygenase</keyword>
<keyword id="KW-0547">Nucleotide-binding</keyword>
<keyword id="KW-0560">Oxidoreductase</keyword>
<proteinExistence type="inferred from homology"/>
<reference key="1">
    <citation type="journal article" date="2001" name="Lancet">
        <title>Whole genome sequencing of meticillin-resistant Staphylococcus aureus.</title>
        <authorList>
            <person name="Kuroda M."/>
            <person name="Ohta T."/>
            <person name="Uchiyama I."/>
            <person name="Baba T."/>
            <person name="Yuzawa H."/>
            <person name="Kobayashi I."/>
            <person name="Cui L."/>
            <person name="Oguchi A."/>
            <person name="Aoki K."/>
            <person name="Nagai Y."/>
            <person name="Lian J.-Q."/>
            <person name="Ito T."/>
            <person name="Kanamori M."/>
            <person name="Matsumaru H."/>
            <person name="Maruyama A."/>
            <person name="Murakami H."/>
            <person name="Hosoyama A."/>
            <person name="Mizutani-Ui Y."/>
            <person name="Takahashi N.K."/>
            <person name="Sawano T."/>
            <person name="Inoue R."/>
            <person name="Kaito C."/>
            <person name="Sekimizu K."/>
            <person name="Hirakawa H."/>
            <person name="Kuhara S."/>
            <person name="Goto S."/>
            <person name="Yabuzaki J."/>
            <person name="Kanehisa M."/>
            <person name="Yamashita A."/>
            <person name="Oshima K."/>
            <person name="Furuya K."/>
            <person name="Yoshino C."/>
            <person name="Shiba T."/>
            <person name="Hattori M."/>
            <person name="Ogasawara N."/>
            <person name="Hayashi H."/>
            <person name="Hiramatsu K."/>
        </authorList>
    </citation>
    <scope>NUCLEOTIDE SEQUENCE [LARGE SCALE GENOMIC DNA]</scope>
    <source>
        <strain>N315</strain>
    </source>
</reference>
<comment type="function">
    <text evidence="2">Nitronate monooxygenase that uses molecular oxygen to catalyze the oxidative denitrification of alkyl nitronates. Acts on propionate 3-nitronate (P3N), the presumed physiological substrate. Probably functions in the detoxification of P3N, a metabolic poison produced by plants and fungi as a defense mechanism.</text>
</comment>
<comment type="catalytic activity">
    <reaction evidence="1">
        <text>3 propionate 3-nitronate + 3 O2 + H2O = 3 3-oxopropanoate + 2 nitrate + nitrite + H2O2 + 3 H(+)</text>
        <dbReference type="Rhea" id="RHEA:57332"/>
        <dbReference type="ChEBI" id="CHEBI:15377"/>
        <dbReference type="ChEBI" id="CHEBI:15378"/>
        <dbReference type="ChEBI" id="CHEBI:15379"/>
        <dbReference type="ChEBI" id="CHEBI:16240"/>
        <dbReference type="ChEBI" id="CHEBI:16301"/>
        <dbReference type="ChEBI" id="CHEBI:17632"/>
        <dbReference type="ChEBI" id="CHEBI:33190"/>
        <dbReference type="ChEBI" id="CHEBI:136067"/>
    </reaction>
</comment>
<comment type="cofactor">
    <cofactor evidence="2">
        <name>FMN</name>
        <dbReference type="ChEBI" id="CHEBI:58210"/>
    </cofactor>
    <text evidence="2">Binds 1 FMN per subunit.</text>
</comment>
<comment type="miscellaneous">
    <text evidence="3">P3N is a potent irreversible inhibitor of the key enzyme succinate dehydrogenase in the Krebs cycle and electron transport chain. P3N has been shown to be a toxic metabolite to bacteria, plants, fungi, mammals or any organism that uses succinate dehydrogenase.</text>
</comment>
<comment type="similarity">
    <text evidence="3">Belongs to the nitronate monooxygenase family. NMO class I subfamily.</text>
</comment>
<organism>
    <name type="scientific">Staphylococcus aureus (strain N315)</name>
    <dbReference type="NCBI Taxonomy" id="158879"/>
    <lineage>
        <taxon>Bacteria</taxon>
        <taxon>Bacillati</taxon>
        <taxon>Bacillota</taxon>
        <taxon>Bacilli</taxon>
        <taxon>Bacillales</taxon>
        <taxon>Staphylococcaceae</taxon>
        <taxon>Staphylococcus</taxon>
    </lineage>
</organism>
<accession>Q99VF6</accession>